<comment type="catalytic activity">
    <reaction>
        <text>1-(5-phospho-beta-D-ribosyl)-ATP + H2O = 1-(5-phospho-beta-D-ribosyl)-5'-AMP + diphosphate + H(+)</text>
        <dbReference type="Rhea" id="RHEA:22828"/>
        <dbReference type="ChEBI" id="CHEBI:15377"/>
        <dbReference type="ChEBI" id="CHEBI:15378"/>
        <dbReference type="ChEBI" id="CHEBI:33019"/>
        <dbReference type="ChEBI" id="CHEBI:59457"/>
        <dbReference type="ChEBI" id="CHEBI:73183"/>
        <dbReference type="EC" id="3.6.1.31"/>
    </reaction>
</comment>
<comment type="catalytic activity">
    <reaction>
        <text>1-(5-phospho-beta-D-ribosyl)-5'-AMP + H2O = 1-(5-phospho-beta-D-ribosyl)-5-[(5-phospho-beta-D-ribosylamino)methylideneamino]imidazole-4-carboxamide</text>
        <dbReference type="Rhea" id="RHEA:20049"/>
        <dbReference type="ChEBI" id="CHEBI:15377"/>
        <dbReference type="ChEBI" id="CHEBI:58435"/>
        <dbReference type="ChEBI" id="CHEBI:59457"/>
        <dbReference type="EC" id="3.5.4.19"/>
    </reaction>
</comment>
<comment type="pathway">
    <text>Amino-acid biosynthesis; L-histidine biosynthesis; L-histidine from 5-phospho-alpha-D-ribose 1-diphosphate: step 2/9.</text>
</comment>
<comment type="pathway">
    <text>Amino-acid biosynthesis; L-histidine biosynthesis; L-histidine from 5-phospho-alpha-D-ribose 1-diphosphate: step 3/9.</text>
</comment>
<comment type="subcellular location">
    <subcellularLocation>
        <location evidence="1">Cytoplasm</location>
    </subcellularLocation>
</comment>
<comment type="similarity">
    <text evidence="2">In the N-terminal section; belongs to the PRA-CH family.</text>
</comment>
<comment type="similarity">
    <text evidence="2">In the C-terminal section; belongs to the PRA-PH family.</text>
</comment>
<dbReference type="EC" id="3.5.4.19"/>
<dbReference type="EC" id="3.6.1.31"/>
<dbReference type="EMBL" id="CP000046">
    <property type="protein sequence ID" value="AAW37344.1"/>
    <property type="molecule type" value="Genomic_DNA"/>
</dbReference>
<dbReference type="SMR" id="Q5HCM5"/>
<dbReference type="KEGG" id="sac:SACOL2696"/>
<dbReference type="HOGENOM" id="CLU_048577_3_1_9"/>
<dbReference type="UniPathway" id="UPA00031">
    <property type="reaction ID" value="UER00007"/>
</dbReference>
<dbReference type="UniPathway" id="UPA00031">
    <property type="reaction ID" value="UER00008"/>
</dbReference>
<dbReference type="Proteomes" id="UP000000530">
    <property type="component" value="Chromosome"/>
</dbReference>
<dbReference type="GO" id="GO:0005737">
    <property type="term" value="C:cytoplasm"/>
    <property type="evidence" value="ECO:0007669"/>
    <property type="project" value="UniProtKB-SubCell"/>
</dbReference>
<dbReference type="GO" id="GO:0005524">
    <property type="term" value="F:ATP binding"/>
    <property type="evidence" value="ECO:0007669"/>
    <property type="project" value="UniProtKB-KW"/>
</dbReference>
<dbReference type="GO" id="GO:0004635">
    <property type="term" value="F:phosphoribosyl-AMP cyclohydrolase activity"/>
    <property type="evidence" value="ECO:0007669"/>
    <property type="project" value="UniProtKB-UniRule"/>
</dbReference>
<dbReference type="GO" id="GO:0004636">
    <property type="term" value="F:phosphoribosyl-ATP diphosphatase activity"/>
    <property type="evidence" value="ECO:0007669"/>
    <property type="project" value="UniProtKB-UniRule"/>
</dbReference>
<dbReference type="GO" id="GO:0000105">
    <property type="term" value="P:L-histidine biosynthetic process"/>
    <property type="evidence" value="ECO:0007669"/>
    <property type="project" value="UniProtKB-UniRule"/>
</dbReference>
<dbReference type="CDD" id="cd11534">
    <property type="entry name" value="NTP-PPase_HisIE_like"/>
    <property type="match status" value="1"/>
</dbReference>
<dbReference type="FunFam" id="3.10.20.810:FF:000001">
    <property type="entry name" value="Histidine biosynthesis bifunctional protein HisIE"/>
    <property type="match status" value="1"/>
</dbReference>
<dbReference type="Gene3D" id="1.10.287.1080">
    <property type="entry name" value="MazG-like"/>
    <property type="match status" value="1"/>
</dbReference>
<dbReference type="Gene3D" id="3.10.20.810">
    <property type="entry name" value="Phosphoribosyl-AMP cyclohydrolase"/>
    <property type="match status" value="1"/>
</dbReference>
<dbReference type="HAMAP" id="MF_01020">
    <property type="entry name" value="HisE"/>
    <property type="match status" value="1"/>
</dbReference>
<dbReference type="HAMAP" id="MF_01021">
    <property type="entry name" value="HisI"/>
    <property type="match status" value="1"/>
</dbReference>
<dbReference type="HAMAP" id="MF_01019">
    <property type="entry name" value="HisIE"/>
    <property type="match status" value="1"/>
</dbReference>
<dbReference type="InterPro" id="IPR023019">
    <property type="entry name" value="His_synth_HisIE"/>
</dbReference>
<dbReference type="InterPro" id="IPR008179">
    <property type="entry name" value="HisE"/>
</dbReference>
<dbReference type="InterPro" id="IPR026660">
    <property type="entry name" value="PRA-CH"/>
</dbReference>
<dbReference type="InterPro" id="IPR021130">
    <property type="entry name" value="PRib-ATP_PPHydrolase-like"/>
</dbReference>
<dbReference type="InterPro" id="IPR002496">
    <property type="entry name" value="PRib_AMP_CycHydrolase_dom"/>
</dbReference>
<dbReference type="InterPro" id="IPR038019">
    <property type="entry name" value="PRib_AMP_CycHydrolase_sf"/>
</dbReference>
<dbReference type="NCBIfam" id="TIGR03188">
    <property type="entry name" value="histidine_hisI"/>
    <property type="match status" value="1"/>
</dbReference>
<dbReference type="NCBIfam" id="NF000768">
    <property type="entry name" value="PRK00051.1"/>
    <property type="match status" value="1"/>
</dbReference>
<dbReference type="NCBIfam" id="NF002747">
    <property type="entry name" value="PRK02759.1"/>
    <property type="match status" value="1"/>
</dbReference>
<dbReference type="PANTHER" id="PTHR42945">
    <property type="entry name" value="HISTIDINE BIOSYNTHESIS BIFUNCTIONAL PROTEIN"/>
    <property type="match status" value="1"/>
</dbReference>
<dbReference type="PANTHER" id="PTHR42945:SF9">
    <property type="entry name" value="HISTIDINE BIOSYNTHESIS BIFUNCTIONAL PROTEIN HISIE"/>
    <property type="match status" value="1"/>
</dbReference>
<dbReference type="Pfam" id="PF01502">
    <property type="entry name" value="PRA-CH"/>
    <property type="match status" value="1"/>
</dbReference>
<dbReference type="Pfam" id="PF01503">
    <property type="entry name" value="PRA-PH"/>
    <property type="match status" value="1"/>
</dbReference>
<dbReference type="SUPFAM" id="SSF101386">
    <property type="entry name" value="all-alpha NTP pyrophosphatases"/>
    <property type="match status" value="1"/>
</dbReference>
<dbReference type="SUPFAM" id="SSF141734">
    <property type="entry name" value="HisI-like"/>
    <property type="match status" value="1"/>
</dbReference>
<organism>
    <name type="scientific">Staphylococcus aureus (strain COL)</name>
    <dbReference type="NCBI Taxonomy" id="93062"/>
    <lineage>
        <taxon>Bacteria</taxon>
        <taxon>Bacillati</taxon>
        <taxon>Bacillota</taxon>
        <taxon>Bacilli</taxon>
        <taxon>Bacillales</taxon>
        <taxon>Staphylococcaceae</taxon>
        <taxon>Staphylococcus</taxon>
    </lineage>
</organism>
<feature type="chain" id="PRO_0000136430" description="Histidine biosynthesis bifunctional protein HisIE">
    <location>
        <begin position="1"/>
        <end position="210"/>
    </location>
</feature>
<feature type="region of interest" description="Phosphoribosyl-AMP cyclohydrolase">
    <location>
        <begin position="1"/>
        <end position="106"/>
    </location>
</feature>
<feature type="region of interest" description="Phosphoribosyl-ATP pyrophosphohydrolase">
    <location>
        <begin position="107"/>
        <end position="210"/>
    </location>
</feature>
<gene>
    <name type="primary">hisI</name>
    <name type="synonym">hisIE</name>
    <name type="ordered locus">SACOL2696</name>
</gene>
<proteinExistence type="inferred from homology"/>
<reference key="1">
    <citation type="journal article" date="2005" name="J. Bacteriol.">
        <title>Insights on evolution of virulence and resistance from the complete genome analysis of an early methicillin-resistant Staphylococcus aureus strain and a biofilm-producing methicillin-resistant Staphylococcus epidermidis strain.</title>
        <authorList>
            <person name="Gill S.R."/>
            <person name="Fouts D.E."/>
            <person name="Archer G.L."/>
            <person name="Mongodin E.F."/>
            <person name="DeBoy R.T."/>
            <person name="Ravel J."/>
            <person name="Paulsen I.T."/>
            <person name="Kolonay J.F."/>
            <person name="Brinkac L.M."/>
            <person name="Beanan M.J."/>
            <person name="Dodson R.J."/>
            <person name="Daugherty S.C."/>
            <person name="Madupu R."/>
            <person name="Angiuoli S.V."/>
            <person name="Durkin A.S."/>
            <person name="Haft D.H."/>
            <person name="Vamathevan J.J."/>
            <person name="Khouri H."/>
            <person name="Utterback T.R."/>
            <person name="Lee C."/>
            <person name="Dimitrov G."/>
            <person name="Jiang L."/>
            <person name="Qin H."/>
            <person name="Weidman J."/>
            <person name="Tran K."/>
            <person name="Kang K.H."/>
            <person name="Hance I.R."/>
            <person name="Nelson K.E."/>
            <person name="Fraser C.M."/>
        </authorList>
    </citation>
    <scope>NUCLEOTIDE SEQUENCE [LARGE SCALE GENOMIC DNA]</scope>
    <source>
        <strain>COL</strain>
    </source>
</reference>
<evidence type="ECO:0000250" key="1"/>
<evidence type="ECO:0000305" key="2"/>
<keyword id="KW-0028">Amino-acid biosynthesis</keyword>
<keyword id="KW-0067">ATP-binding</keyword>
<keyword id="KW-0963">Cytoplasm</keyword>
<keyword id="KW-0368">Histidine biosynthesis</keyword>
<keyword id="KW-0378">Hydrolase</keyword>
<keyword id="KW-0511">Multifunctional enzyme</keyword>
<keyword id="KW-0547">Nucleotide-binding</keyword>
<protein>
    <recommendedName>
        <fullName>Histidine biosynthesis bifunctional protein HisIE</fullName>
    </recommendedName>
    <domain>
        <recommendedName>
            <fullName>Phosphoribosyl-AMP cyclohydrolase</fullName>
            <shortName>PRA-CH</shortName>
            <ecNumber>3.5.4.19</ecNumber>
        </recommendedName>
    </domain>
    <domain>
        <recommendedName>
            <fullName>Phosphoribosyl-ATP pyrophosphatase</fullName>
            <shortName>PRA-PH</shortName>
            <ecNumber>3.6.1.31</ecNumber>
        </recommendedName>
    </domain>
</protein>
<sequence>MTNYKIDFSKGLVPAILQDNQTKQVLMLGYMNQEAFDKTIEDGVVCFYSRSKQRLWTKGETSGHTQRVKDIHVDCDNDTILIDVIPNGPTCHTGSQSCFNTEVPFSVQTLAQTVQDSAQSNNEKSYTKYLLTEGIEKITKKYGEEAFEVVIEAIKGDKKAFVSEVADELYHLFVLMHALGVDFSEIEAELARRHHKRNNFKGERQNIEQW</sequence>
<accession>Q5HCM5</accession>
<name>HIS2_STAAC</name>